<feature type="chain" id="PRO_1000015085" description="Small ribosomal subunit protein uS10">
    <location>
        <begin position="1"/>
        <end position="103"/>
    </location>
</feature>
<reference key="1">
    <citation type="journal article" date="2006" name="Genome Biol.">
        <title>Genomic analysis reveals that Pseudomonas aeruginosa virulence is combinatorial.</title>
        <authorList>
            <person name="Lee D.G."/>
            <person name="Urbach J.M."/>
            <person name="Wu G."/>
            <person name="Liberati N.T."/>
            <person name="Feinbaum R.L."/>
            <person name="Miyata S."/>
            <person name="Diggins L.T."/>
            <person name="He J."/>
            <person name="Saucier M."/>
            <person name="Deziel E."/>
            <person name="Friedman L."/>
            <person name="Li L."/>
            <person name="Grills G."/>
            <person name="Montgomery K."/>
            <person name="Kucherlapati R."/>
            <person name="Rahme L.G."/>
            <person name="Ausubel F.M."/>
        </authorList>
    </citation>
    <scope>NUCLEOTIDE SEQUENCE [LARGE SCALE GENOMIC DNA]</scope>
    <source>
        <strain>UCBPP-PA14</strain>
    </source>
</reference>
<sequence length="103" mass="11767">MQNQQIRIRLKAFDHRLIDQSTQEIVETAKRTGAQVRGPIPLPTRKERFTVLISPHVNKDARDQYEIRTHKRVLDIVQPTDKTVDALMKLDLAAGVEVQISLG</sequence>
<proteinExistence type="inferred from homology"/>
<name>RS10_PSEAB</name>
<protein>
    <recommendedName>
        <fullName evidence="1">Small ribosomal subunit protein uS10</fullName>
    </recommendedName>
    <alternativeName>
        <fullName evidence="2">30S ribosomal protein S10</fullName>
    </alternativeName>
</protein>
<comment type="function">
    <text evidence="1">Involved in the binding of tRNA to the ribosomes.</text>
</comment>
<comment type="subunit">
    <text evidence="1">Part of the 30S ribosomal subunit.</text>
</comment>
<comment type="similarity">
    <text evidence="1">Belongs to the universal ribosomal protein uS10 family.</text>
</comment>
<keyword id="KW-0687">Ribonucleoprotein</keyword>
<keyword id="KW-0689">Ribosomal protein</keyword>
<accession>Q02T81</accession>
<dbReference type="EMBL" id="CP000438">
    <property type="protein sequence ID" value="ABJ13535.1"/>
    <property type="molecule type" value="Genomic_DNA"/>
</dbReference>
<dbReference type="RefSeq" id="WP_003103876.1">
    <property type="nucleotide sequence ID" value="NZ_CP034244.1"/>
</dbReference>
<dbReference type="SMR" id="Q02T81"/>
<dbReference type="GeneID" id="77261717"/>
<dbReference type="KEGG" id="pau:PA14_08840"/>
<dbReference type="PseudoCAP" id="PA14_08840"/>
<dbReference type="HOGENOM" id="CLU_122625_1_3_6"/>
<dbReference type="BioCyc" id="PAER208963:G1G74-735-MONOMER"/>
<dbReference type="Proteomes" id="UP000000653">
    <property type="component" value="Chromosome"/>
</dbReference>
<dbReference type="GO" id="GO:1990904">
    <property type="term" value="C:ribonucleoprotein complex"/>
    <property type="evidence" value="ECO:0007669"/>
    <property type="project" value="UniProtKB-KW"/>
</dbReference>
<dbReference type="GO" id="GO:0005840">
    <property type="term" value="C:ribosome"/>
    <property type="evidence" value="ECO:0007669"/>
    <property type="project" value="UniProtKB-KW"/>
</dbReference>
<dbReference type="GO" id="GO:0003735">
    <property type="term" value="F:structural constituent of ribosome"/>
    <property type="evidence" value="ECO:0007669"/>
    <property type="project" value="InterPro"/>
</dbReference>
<dbReference type="GO" id="GO:0000049">
    <property type="term" value="F:tRNA binding"/>
    <property type="evidence" value="ECO:0007669"/>
    <property type="project" value="UniProtKB-UniRule"/>
</dbReference>
<dbReference type="GO" id="GO:0006412">
    <property type="term" value="P:translation"/>
    <property type="evidence" value="ECO:0007669"/>
    <property type="project" value="UniProtKB-UniRule"/>
</dbReference>
<dbReference type="FunFam" id="3.30.70.600:FF:000001">
    <property type="entry name" value="30S ribosomal protein S10"/>
    <property type="match status" value="1"/>
</dbReference>
<dbReference type="Gene3D" id="3.30.70.600">
    <property type="entry name" value="Ribosomal protein S10 domain"/>
    <property type="match status" value="1"/>
</dbReference>
<dbReference type="HAMAP" id="MF_00508">
    <property type="entry name" value="Ribosomal_uS10"/>
    <property type="match status" value="1"/>
</dbReference>
<dbReference type="InterPro" id="IPR001848">
    <property type="entry name" value="Ribosomal_uS10"/>
</dbReference>
<dbReference type="InterPro" id="IPR018268">
    <property type="entry name" value="Ribosomal_uS10_CS"/>
</dbReference>
<dbReference type="InterPro" id="IPR027486">
    <property type="entry name" value="Ribosomal_uS10_dom"/>
</dbReference>
<dbReference type="InterPro" id="IPR036838">
    <property type="entry name" value="Ribosomal_uS10_dom_sf"/>
</dbReference>
<dbReference type="NCBIfam" id="NF001861">
    <property type="entry name" value="PRK00596.1"/>
    <property type="match status" value="1"/>
</dbReference>
<dbReference type="NCBIfam" id="TIGR01049">
    <property type="entry name" value="rpsJ_bact"/>
    <property type="match status" value="1"/>
</dbReference>
<dbReference type="PANTHER" id="PTHR11700">
    <property type="entry name" value="30S RIBOSOMAL PROTEIN S10 FAMILY MEMBER"/>
    <property type="match status" value="1"/>
</dbReference>
<dbReference type="Pfam" id="PF00338">
    <property type="entry name" value="Ribosomal_S10"/>
    <property type="match status" value="1"/>
</dbReference>
<dbReference type="PRINTS" id="PR00971">
    <property type="entry name" value="RIBOSOMALS10"/>
</dbReference>
<dbReference type="SMART" id="SM01403">
    <property type="entry name" value="Ribosomal_S10"/>
    <property type="match status" value="1"/>
</dbReference>
<dbReference type="SUPFAM" id="SSF54999">
    <property type="entry name" value="Ribosomal protein S10"/>
    <property type="match status" value="1"/>
</dbReference>
<dbReference type="PROSITE" id="PS00361">
    <property type="entry name" value="RIBOSOMAL_S10"/>
    <property type="match status" value="1"/>
</dbReference>
<gene>
    <name evidence="1" type="primary">rpsJ</name>
    <name type="ordered locus">PA14_08840</name>
</gene>
<evidence type="ECO:0000255" key="1">
    <source>
        <dbReference type="HAMAP-Rule" id="MF_00508"/>
    </source>
</evidence>
<evidence type="ECO:0000305" key="2"/>
<organism>
    <name type="scientific">Pseudomonas aeruginosa (strain UCBPP-PA14)</name>
    <dbReference type="NCBI Taxonomy" id="208963"/>
    <lineage>
        <taxon>Bacteria</taxon>
        <taxon>Pseudomonadati</taxon>
        <taxon>Pseudomonadota</taxon>
        <taxon>Gammaproteobacteria</taxon>
        <taxon>Pseudomonadales</taxon>
        <taxon>Pseudomonadaceae</taxon>
        <taxon>Pseudomonas</taxon>
    </lineage>
</organism>